<name>SNAI1_MOUSE</name>
<proteinExistence type="evidence at protein level"/>
<evidence type="ECO:0000250" key="1"/>
<evidence type="ECO:0000250" key="2">
    <source>
        <dbReference type="UniProtKB" id="O95863"/>
    </source>
</evidence>
<evidence type="ECO:0000255" key="3">
    <source>
        <dbReference type="PROSITE-ProRule" id="PRU00042"/>
    </source>
</evidence>
<evidence type="ECO:0000256" key="4">
    <source>
        <dbReference type="SAM" id="MobiDB-lite"/>
    </source>
</evidence>
<evidence type="ECO:0000269" key="5">
    <source>
    </source>
</evidence>
<evidence type="ECO:0000269" key="6">
    <source>
    </source>
</evidence>
<evidence type="ECO:0000269" key="7">
    <source>
    </source>
</evidence>
<evidence type="ECO:0000269" key="8">
    <source>
    </source>
</evidence>
<evidence type="ECO:0000269" key="9">
    <source>
    </source>
</evidence>
<evidence type="ECO:0000269" key="10">
    <source>
    </source>
</evidence>
<evidence type="ECO:0000269" key="11">
    <source>
    </source>
</evidence>
<evidence type="ECO:0000269" key="12">
    <source>
    </source>
</evidence>
<evidence type="ECO:0000305" key="13"/>
<feature type="chain" id="PRO_0000047030" description="Zinc finger protein SNAI1">
    <location>
        <begin position="1"/>
        <end position="264"/>
    </location>
</feature>
<feature type="zinc finger region" description="C2H2-type 1" evidence="3">
    <location>
        <begin position="156"/>
        <end position="176"/>
    </location>
</feature>
<feature type="zinc finger region" description="C2H2-type 2" evidence="3">
    <location>
        <begin position="180"/>
        <end position="202"/>
    </location>
</feature>
<feature type="zinc finger region" description="C2H2-type 3" evidence="3">
    <location>
        <begin position="210"/>
        <end position="230"/>
    </location>
</feature>
<feature type="zinc finger region" description="C2H2-type 4; atypical" evidence="3">
    <location>
        <begin position="236"/>
        <end position="259"/>
    </location>
</feature>
<feature type="region of interest" description="SNAG domain" evidence="13">
    <location>
        <begin position="1"/>
        <end position="20"/>
    </location>
</feature>
<feature type="region of interest" description="Required and sufficient for interaction with KDM1A" evidence="2">
    <location>
        <begin position="2"/>
        <end position="7"/>
    </location>
</feature>
<feature type="region of interest" description="LATS2 binding" evidence="1">
    <location>
        <begin position="10"/>
        <end position="40"/>
    </location>
</feature>
<feature type="region of interest" description="Disordered" evidence="4">
    <location>
        <begin position="85"/>
        <end position="116"/>
    </location>
</feature>
<feature type="region of interest" description="Required for FBXL14-triggered degradation" evidence="2">
    <location>
        <begin position="120"/>
        <end position="151"/>
    </location>
</feature>
<feature type="region of interest" description="Required for nuclear localization and interaction with KPNB1, NOTCH1 and PARP1" evidence="2">
    <location>
        <begin position="151"/>
        <end position="264"/>
    </location>
</feature>
<feature type="short sequence motif" description="Destruction motif">
    <location>
        <begin position="95"/>
        <end position="100"/>
    </location>
</feature>
<feature type="modified residue" description="Phosphoserine" evidence="2">
    <location>
        <position position="11"/>
    </location>
</feature>
<feature type="modified residue" description="Phosphoserine" evidence="2">
    <location>
        <position position="82"/>
    </location>
</feature>
<feature type="modified residue" description="Phosphoserine" evidence="2">
    <location>
        <position position="92"/>
    </location>
</feature>
<feature type="modified residue" description="Phosphoserine" evidence="2">
    <location>
        <position position="96"/>
    </location>
</feature>
<feature type="modified residue" description="Phosphoserine" evidence="2">
    <location>
        <position position="100"/>
    </location>
</feature>
<feature type="modified residue" description="Phosphoserine" evidence="2">
    <location>
        <position position="104"/>
    </location>
</feature>
<feature type="modified residue" description="Phosphoserine" evidence="2">
    <location>
        <position position="107"/>
    </location>
</feature>
<feature type="modified residue" description="Phosphoserine" evidence="2">
    <location>
        <position position="111"/>
    </location>
</feature>
<feature type="modified residue" description="Phosphoserine" evidence="2">
    <location>
        <position position="115"/>
    </location>
</feature>
<feature type="modified residue" description="Phosphoserine" evidence="2">
    <location>
        <position position="119"/>
    </location>
</feature>
<feature type="modified residue" description="Phosphothreonine" evidence="2">
    <location>
        <position position="203"/>
    </location>
</feature>
<feature type="modified residue" description="Phosphoserine" evidence="2">
    <location>
        <position position="246"/>
    </location>
</feature>
<feature type="glycosylation site" description="O-linked (GlcNAc) serine" evidence="1">
    <location>
        <position position="112"/>
    </location>
</feature>
<feature type="cross-link" description="Glycyl lysine isopeptide (Lys-Gly) (interchain with G-Cter in ubiquitin)" evidence="2">
    <location>
        <position position="98"/>
    </location>
</feature>
<feature type="cross-link" description="Glycyl lysine isopeptide (Lys-Gly) (interchain with G-Cter in ubiquitin)" evidence="2">
    <location>
        <position position="137"/>
    </location>
</feature>
<feature type="cross-link" description="Glycyl lysine isopeptide (Lys-Gly) (interchain with G-Cter in ubiquitin)" evidence="2">
    <location>
        <position position="146"/>
    </location>
</feature>
<feature type="sequence conflict" description="In Ref. 2; CAA47675." evidence="13" ref="2">
    <original>D</original>
    <variation>V</variation>
    <location>
        <position position="219"/>
    </location>
</feature>
<organism>
    <name type="scientific">Mus musculus</name>
    <name type="common">Mouse</name>
    <dbReference type="NCBI Taxonomy" id="10090"/>
    <lineage>
        <taxon>Eukaryota</taxon>
        <taxon>Metazoa</taxon>
        <taxon>Chordata</taxon>
        <taxon>Craniata</taxon>
        <taxon>Vertebrata</taxon>
        <taxon>Euteleostomi</taxon>
        <taxon>Mammalia</taxon>
        <taxon>Eutheria</taxon>
        <taxon>Euarchontoglires</taxon>
        <taxon>Glires</taxon>
        <taxon>Rodentia</taxon>
        <taxon>Myomorpha</taxon>
        <taxon>Muroidea</taxon>
        <taxon>Muridae</taxon>
        <taxon>Murinae</taxon>
        <taxon>Mus</taxon>
        <taxon>Mus</taxon>
    </lineage>
</organism>
<reference key="1">
    <citation type="journal article" date="1992" name="Development">
        <title>Isolation of Sna, a mouse gene homologous to the Drosophila genes snail and escargot: its expression pattern suggests multiple roles during postimplantation development.</title>
        <authorList>
            <person name="Smith D.E."/>
            <person name="del Amo F.F."/>
            <person name="Gridley T."/>
        </authorList>
    </citation>
    <scope>NUCLEOTIDE SEQUENCE [MRNA]</scope>
    <source>
        <tissue>Embryo</tissue>
    </source>
</reference>
<reference key="2">
    <citation type="journal article" date="1992" name="Development">
        <title>Cloning and developmental expression of Sna, a murine homologue of the Drosophila snail gene.</title>
        <authorList>
            <person name="Nieto A.M."/>
            <person name="Bennett M.F."/>
            <person name="Sargent M.G."/>
            <person name="Wilkinson D.G."/>
        </authorList>
    </citation>
    <scope>NUCLEOTIDE SEQUENCE [MRNA]</scope>
</reference>
<reference key="3">
    <citation type="journal article" date="2004" name="Genome Res.">
        <title>The status, quality, and expansion of the NIH full-length cDNA project: the Mammalian Gene Collection (MGC).</title>
        <authorList>
            <consortium name="The MGC Project Team"/>
        </authorList>
    </citation>
    <scope>NUCLEOTIDE SEQUENCE [LARGE SCALE MRNA]</scope>
    <source>
        <strain>Czech II</strain>
        <tissue>Lung</tissue>
    </source>
</reference>
<reference key="4">
    <citation type="journal article" date="1997" name="Mamm. Genome">
        <title>Genomic organization and chromosomal localization of the mouse snail (Sna) gene.</title>
        <authorList>
            <person name="Jiang R."/>
            <person name="Copeland N.G."/>
            <person name="Gilbert D.J."/>
            <person name="Jenkins N.A."/>
            <person name="Gridley T."/>
        </authorList>
    </citation>
    <scope>NUCLEOTIDE SEQUENCE [GENOMIC DNA] OF 1-27</scope>
    <source>
        <strain>129/Sv</strain>
    </source>
</reference>
<reference key="5">
    <citation type="journal article" date="2000" name="Nat. Cell Biol.">
        <title>The transcription factor snail controls epithelial-mesenchymal transitions by repressing E-cadherin expression.</title>
        <authorList>
            <person name="Cano A."/>
            <person name="Perez-Moreno M.A."/>
            <person name="Rodrigo I."/>
            <person name="Locascio A."/>
            <person name="Blanco M.J."/>
            <person name="del Barrio M.G."/>
            <person name="Portillo F."/>
            <person name="Nieto M.A."/>
        </authorList>
    </citation>
    <scope>FUNCTION</scope>
    <scope>DEVELOPMENTAL STAGE</scope>
</reference>
<reference key="6">
    <citation type="journal article" date="2001" name="Mol. Cell. Biol.">
        <title>The mouse snail gene encodes a key regulator of the epithelial-mesenchymal transition.</title>
        <authorList>
            <person name="Carver E.A."/>
            <person name="Jiang R."/>
            <person name="Lan Y."/>
            <person name="Oram K.F."/>
            <person name="Gridley T."/>
        </authorList>
    </citation>
    <scope>FUNCTION</scope>
    <scope>DISRUPTION PHENOTYPE</scope>
</reference>
<reference key="7">
    <citation type="journal article" date="2003" name="Mol. Cell. Biol.">
        <title>Phosphorylation regulates the subcellular location and activity of the snail transcriptional repressor.</title>
        <authorList>
            <person name="Dominguez D."/>
            <person name="Montserrat-Sentis B."/>
            <person name="Virgos-Soler A."/>
            <person name="Guaita S."/>
            <person name="Grueso J."/>
            <person name="Porta M."/>
            <person name="Puig I."/>
            <person name="Baulida J."/>
            <person name="Franci C."/>
            <person name="Garcia de Herreros A."/>
        </authorList>
    </citation>
    <scope>SUBCELLULAR LOCATION</scope>
    <scope>PHOSPHORYLATION</scope>
</reference>
<reference key="8">
    <citation type="journal article" date="2008" name="Dev. Cell">
        <title>Ajuba LIM proteins are snail/slug corepressors required for neural crest development in Xenopus.</title>
        <authorList>
            <person name="Langer E.M."/>
            <person name="Feng Y."/>
            <person name="Zhaoyuan H."/>
            <person name="Rauscher F.J. III"/>
            <person name="Kroll K.L."/>
            <person name="Longmore G.D."/>
        </authorList>
    </citation>
    <scope>INTERACTION WITH LIMD1; WTIP AND AJUBA</scope>
</reference>
<reference key="9">
    <citation type="journal article" date="2009" name="J. Cell Sci.">
        <title>Characterization of Snail nuclear import pathways as representatives of C2H2 zinc finger transcription factors.</title>
        <authorList>
            <person name="Mingot J.M."/>
            <person name="Vega S."/>
            <person name="Maestro B."/>
            <person name="Sanz J.M."/>
            <person name="Nieto M.A."/>
        </authorList>
    </citation>
    <scope>INTERACTION WITH KPNA2</scope>
</reference>
<reference key="10">
    <citation type="journal article" date="2010" name="J. Biol. Chem.">
        <title>The hypoxia-controlled FBXL14 ubiquitin ligase targets SNAIL1 for proteasome degradation.</title>
        <authorList>
            <person name="Vinas-Castells R."/>
            <person name="Beltran M."/>
            <person name="Valls G."/>
            <person name="Gomez I."/>
            <person name="Garcia J.M."/>
            <person name="Montserrat-Sentis B."/>
            <person name="Baulida J."/>
            <person name="Bonilla F."/>
            <person name="de Herreros A.G."/>
            <person name="Diaz V.M."/>
        </authorList>
    </citation>
    <scope>UBIQUITINATION BY FBXL14</scope>
</reference>
<reference key="11">
    <citation type="journal article" date="2010" name="Mol. Biol. Cell">
        <title>Phosphorylation of serine 11 and serine 92 as new positive regulators of human Snail1 function: potential involvement of casein kinase-2 and the cAMP-activated kinase protein kinase A.</title>
        <authorList>
            <person name="MacPherson M.R."/>
            <person name="Molina P."/>
            <person name="Souchelnytskyi S."/>
            <person name="Wernstedt C."/>
            <person name="Martin-Perez J."/>
            <person name="Portillo F."/>
            <person name="Cano A."/>
        </authorList>
    </citation>
    <scope>INTERACTION WITH CSNK2A1</scope>
</reference>
<reference key="12">
    <citation type="journal article" date="2011" name="Oncogene">
        <title>Poly(ADP-ribose)-dependent regulation of Snail1 protein stability.</title>
        <authorList>
            <person name="Rodriguez M.I."/>
            <person name="Gonzalez-Flores A."/>
            <person name="Dantzer F."/>
            <person name="Collard J."/>
            <person name="de Herreros A.G."/>
            <person name="Oliver F.J."/>
        </authorList>
    </citation>
    <scope>INTERACTION WITH PARP1</scope>
</reference>
<reference key="13">
    <citation type="journal article" date="2013" name="Mol. Cell">
        <title>Regulation of heterochromatin transcription by Snail1/LOXL2 during epithelial-to-mesenchymal transition.</title>
        <authorList>
            <person name="Millanes-Romero A."/>
            <person name="Herranz N."/>
            <person name="Perrera V."/>
            <person name="Iturbide A."/>
            <person name="Loubat-Casanovas J."/>
            <person name="Gil J."/>
            <person name="Jenuwein T."/>
            <person name="Garcia de Herreros A."/>
            <person name="Peiro S."/>
        </authorList>
    </citation>
    <scope>FUNCTION</scope>
</reference>
<sequence>MPRSFLVRKPSDPRRKPNYSELQDACVEFTFQQPYDQAHLLAAIPPPEVLNPAASLPTLIWDSLLVPQVRPVAWATLPLRESPKAVELTSLSDEDSGKSSQPPSPPSPAPSSFSSTSASSLEAEAFIAFPGLGQLPKQLARLSVAKDPQSRKIFNCKYCNKEYLSLGALKMHIRSHTLPCVCTTCGKAFSRPWLLQGHVRTHTGEKPFSCSHCNRAFADRSNLRAHLQTHSDVKRYQCQACARTFSRMSLLHKHQESGCSGGPR</sequence>
<dbReference type="EMBL" id="M95604">
    <property type="protein sequence ID" value="AAA03481.1"/>
    <property type="molecule type" value="mRNA"/>
</dbReference>
<dbReference type="EMBL" id="X67253">
    <property type="protein sequence ID" value="CAA47675.1"/>
    <property type="molecule type" value="mRNA"/>
</dbReference>
<dbReference type="EMBL" id="BC034857">
    <property type="protein sequence ID" value="AAH34857.1"/>
    <property type="molecule type" value="mRNA"/>
</dbReference>
<dbReference type="EMBL" id="U95961">
    <property type="protein sequence ID" value="AAB58054.1"/>
    <property type="molecule type" value="Genomic_DNA"/>
</dbReference>
<dbReference type="CCDS" id="CCDS17102.1"/>
<dbReference type="PIR" id="A49149">
    <property type="entry name" value="A49149"/>
</dbReference>
<dbReference type="RefSeq" id="NP_035557.1">
    <property type="nucleotide sequence ID" value="NM_011427.3"/>
</dbReference>
<dbReference type="SMR" id="Q02085"/>
<dbReference type="BioGRID" id="203361">
    <property type="interactions" value="32"/>
</dbReference>
<dbReference type="FunCoup" id="Q02085">
    <property type="interactions" value="1475"/>
</dbReference>
<dbReference type="IntAct" id="Q02085">
    <property type="interactions" value="4"/>
</dbReference>
<dbReference type="STRING" id="10090.ENSMUSP00000050581"/>
<dbReference type="GlyCosmos" id="Q02085">
    <property type="glycosylation" value="1 site, No reported glycans"/>
</dbReference>
<dbReference type="GlyGen" id="Q02085">
    <property type="glycosylation" value="1 site"/>
</dbReference>
<dbReference type="iPTMnet" id="Q02085"/>
<dbReference type="PhosphoSitePlus" id="Q02085"/>
<dbReference type="jPOST" id="Q02085"/>
<dbReference type="PaxDb" id="10090-ENSMUSP00000050581"/>
<dbReference type="ProteomicsDB" id="261285"/>
<dbReference type="Pumba" id="Q02085"/>
<dbReference type="Antibodypedia" id="3135">
    <property type="antibodies" value="907 antibodies from 45 providers"/>
</dbReference>
<dbReference type="DNASU" id="20613"/>
<dbReference type="Ensembl" id="ENSMUST00000052631.8">
    <property type="protein sequence ID" value="ENSMUSP00000050581.8"/>
    <property type="gene ID" value="ENSMUSG00000042821.8"/>
</dbReference>
<dbReference type="GeneID" id="20613"/>
<dbReference type="KEGG" id="mmu:20613"/>
<dbReference type="UCSC" id="uc008nzy.1">
    <property type="organism name" value="mouse"/>
</dbReference>
<dbReference type="AGR" id="MGI:98330"/>
<dbReference type="CTD" id="6615"/>
<dbReference type="MGI" id="MGI:98330">
    <property type="gene designation" value="Snai1"/>
</dbReference>
<dbReference type="VEuPathDB" id="HostDB:ENSMUSG00000042821"/>
<dbReference type="eggNOG" id="KOG2462">
    <property type="taxonomic scope" value="Eukaryota"/>
</dbReference>
<dbReference type="GeneTree" id="ENSGT00940000154681"/>
<dbReference type="HOGENOM" id="CLU_002678_42_3_1"/>
<dbReference type="InParanoid" id="Q02085"/>
<dbReference type="OMA" id="TRKAFNC"/>
<dbReference type="OrthoDB" id="5428132at2759"/>
<dbReference type="PhylomeDB" id="Q02085"/>
<dbReference type="TreeFam" id="TF315515"/>
<dbReference type="BioGRID-ORCS" id="20613">
    <property type="hits" value="10 hits in 83 CRISPR screens"/>
</dbReference>
<dbReference type="ChiTaRS" id="Snai1">
    <property type="organism name" value="mouse"/>
</dbReference>
<dbReference type="PRO" id="PR:Q02085"/>
<dbReference type="Proteomes" id="UP000000589">
    <property type="component" value="Chromosome 2"/>
</dbReference>
<dbReference type="RNAct" id="Q02085">
    <property type="molecule type" value="protein"/>
</dbReference>
<dbReference type="Bgee" id="ENSMUSG00000042821">
    <property type="expression patterns" value="Expressed in lamina propria of urethra and 195 other cell types or tissues"/>
</dbReference>
<dbReference type="ExpressionAtlas" id="Q02085">
    <property type="expression patterns" value="baseline and differential"/>
</dbReference>
<dbReference type="GO" id="GO:0005737">
    <property type="term" value="C:cytoplasm"/>
    <property type="evidence" value="ECO:0000314"/>
    <property type="project" value="UniProtKB"/>
</dbReference>
<dbReference type="GO" id="GO:0005829">
    <property type="term" value="C:cytosol"/>
    <property type="evidence" value="ECO:0007669"/>
    <property type="project" value="Ensembl"/>
</dbReference>
<dbReference type="GO" id="GO:0001650">
    <property type="term" value="C:fibrillar center"/>
    <property type="evidence" value="ECO:0007669"/>
    <property type="project" value="Ensembl"/>
</dbReference>
<dbReference type="GO" id="GO:0005654">
    <property type="term" value="C:nucleoplasm"/>
    <property type="evidence" value="ECO:0000304"/>
    <property type="project" value="Reactome"/>
</dbReference>
<dbReference type="GO" id="GO:0005634">
    <property type="term" value="C:nucleus"/>
    <property type="evidence" value="ECO:0000314"/>
    <property type="project" value="UniProtKB"/>
</dbReference>
<dbReference type="GO" id="GO:0005721">
    <property type="term" value="C:pericentric heterochromatin"/>
    <property type="evidence" value="ECO:0000314"/>
    <property type="project" value="UniProtKB"/>
</dbReference>
<dbReference type="GO" id="GO:0001227">
    <property type="term" value="F:DNA-binding transcription repressor activity, RNA polymerase II-specific"/>
    <property type="evidence" value="ECO:0000314"/>
    <property type="project" value="NTNU_SB"/>
</dbReference>
<dbReference type="GO" id="GO:0070888">
    <property type="term" value="F:E-box binding"/>
    <property type="evidence" value="ECO:0007669"/>
    <property type="project" value="Ensembl"/>
</dbReference>
<dbReference type="GO" id="GO:0019900">
    <property type="term" value="F:kinase binding"/>
    <property type="evidence" value="ECO:0007669"/>
    <property type="project" value="Ensembl"/>
</dbReference>
<dbReference type="GO" id="GO:0000977">
    <property type="term" value="F:RNA polymerase II transcription regulatory region sequence-specific DNA binding"/>
    <property type="evidence" value="ECO:0000314"/>
    <property type="project" value="NTNU_SB"/>
</dbReference>
<dbReference type="GO" id="GO:0043565">
    <property type="term" value="F:sequence-specific DNA binding"/>
    <property type="evidence" value="ECO:0000314"/>
    <property type="project" value="MGI"/>
</dbReference>
<dbReference type="GO" id="GO:0008270">
    <property type="term" value="F:zinc ion binding"/>
    <property type="evidence" value="ECO:0007669"/>
    <property type="project" value="UniProtKB-KW"/>
</dbReference>
<dbReference type="GO" id="GO:0060070">
    <property type="term" value="P:canonical Wnt signaling pathway"/>
    <property type="evidence" value="ECO:0007669"/>
    <property type="project" value="Ensembl"/>
</dbReference>
<dbReference type="GO" id="GO:0060536">
    <property type="term" value="P:cartilage morphogenesis"/>
    <property type="evidence" value="ECO:0000316"/>
    <property type="project" value="MGI"/>
</dbReference>
<dbReference type="GO" id="GO:0010631">
    <property type="term" value="P:epithelial cell migration"/>
    <property type="evidence" value="ECO:0000316"/>
    <property type="project" value="MGI"/>
</dbReference>
<dbReference type="GO" id="GO:0001837">
    <property type="term" value="P:epithelial to mesenchymal transition"/>
    <property type="evidence" value="ECO:0000314"/>
    <property type="project" value="UniProtKB"/>
</dbReference>
<dbReference type="GO" id="GO:0003198">
    <property type="term" value="P:epithelial to mesenchymal transition involved in endocardial cushion formation"/>
    <property type="evidence" value="ECO:0000316"/>
    <property type="project" value="BHF-UCL"/>
</dbReference>
<dbReference type="GO" id="GO:0031069">
    <property type="term" value="P:hair follicle morphogenesis"/>
    <property type="evidence" value="ECO:0000314"/>
    <property type="project" value="MGI"/>
</dbReference>
<dbReference type="GO" id="GO:0070828">
    <property type="term" value="P:heterochromatin organization"/>
    <property type="evidence" value="ECO:0000315"/>
    <property type="project" value="UniProtKB"/>
</dbReference>
<dbReference type="GO" id="GO:0060972">
    <property type="term" value="P:left/right pattern formation"/>
    <property type="evidence" value="ECO:0000315"/>
    <property type="project" value="MGI"/>
</dbReference>
<dbReference type="GO" id="GO:0007498">
    <property type="term" value="P:mesoderm development"/>
    <property type="evidence" value="ECO:0000315"/>
    <property type="project" value="MGI"/>
</dbReference>
<dbReference type="GO" id="GO:0001707">
    <property type="term" value="P:mesoderm formation"/>
    <property type="evidence" value="ECO:0000315"/>
    <property type="project" value="UniProtKB"/>
</dbReference>
<dbReference type="GO" id="GO:0060806">
    <property type="term" value="P:negative regulation of cell differentiation involved in embryonic placenta development"/>
    <property type="evidence" value="ECO:0000314"/>
    <property type="project" value="MGI"/>
</dbReference>
<dbReference type="GO" id="GO:0043518">
    <property type="term" value="P:negative regulation of DNA damage response, signal transduction by p53 class mediator"/>
    <property type="evidence" value="ECO:0007669"/>
    <property type="project" value="Ensembl"/>
</dbReference>
<dbReference type="GO" id="GO:0045892">
    <property type="term" value="P:negative regulation of DNA-templated transcription"/>
    <property type="evidence" value="ECO:0000314"/>
    <property type="project" value="UniProtKB"/>
</dbReference>
<dbReference type="GO" id="GO:1902230">
    <property type="term" value="P:negative regulation of intrinsic apoptotic signaling pathway in response to DNA damage"/>
    <property type="evidence" value="ECO:0007669"/>
    <property type="project" value="Ensembl"/>
</dbReference>
<dbReference type="GO" id="GO:0000122">
    <property type="term" value="P:negative regulation of transcription by RNA polymerase II"/>
    <property type="evidence" value="ECO:0000314"/>
    <property type="project" value="NTNU_SB"/>
</dbReference>
<dbReference type="GO" id="GO:0010957">
    <property type="term" value="P:negative regulation of vitamin D biosynthetic process"/>
    <property type="evidence" value="ECO:0007669"/>
    <property type="project" value="Ensembl"/>
</dbReference>
<dbReference type="GO" id="GO:0007219">
    <property type="term" value="P:Notch signaling pathway"/>
    <property type="evidence" value="ECO:0000316"/>
    <property type="project" value="BHF-UCL"/>
</dbReference>
<dbReference type="GO" id="GO:0001649">
    <property type="term" value="P:osteoblast differentiation"/>
    <property type="evidence" value="ECO:0007669"/>
    <property type="project" value="Ensembl"/>
</dbReference>
<dbReference type="GO" id="GO:0030335">
    <property type="term" value="P:positive regulation of cell migration"/>
    <property type="evidence" value="ECO:0000315"/>
    <property type="project" value="BHF-UCL"/>
</dbReference>
<dbReference type="GO" id="GO:0045893">
    <property type="term" value="P:positive regulation of DNA-templated transcription"/>
    <property type="evidence" value="ECO:0000314"/>
    <property type="project" value="UniProtKB"/>
</dbReference>
<dbReference type="GO" id="GO:0010718">
    <property type="term" value="P:positive regulation of epithelial to mesenchymal transition"/>
    <property type="evidence" value="ECO:0000315"/>
    <property type="project" value="UniProtKB"/>
</dbReference>
<dbReference type="GO" id="GO:2000810">
    <property type="term" value="P:regulation of bicellular tight junction assembly"/>
    <property type="evidence" value="ECO:0007669"/>
    <property type="project" value="Ensembl"/>
</dbReference>
<dbReference type="GO" id="GO:0006357">
    <property type="term" value="P:regulation of transcription by RNA polymerase II"/>
    <property type="evidence" value="ECO:0000316"/>
    <property type="project" value="MGI"/>
</dbReference>
<dbReference type="GO" id="GO:0060021">
    <property type="term" value="P:roof of mouth development"/>
    <property type="evidence" value="ECO:0000316"/>
    <property type="project" value="MGI"/>
</dbReference>
<dbReference type="GO" id="GO:0060707">
    <property type="term" value="P:trophoblast giant cell differentiation"/>
    <property type="evidence" value="ECO:0000314"/>
    <property type="project" value="MGI"/>
</dbReference>
<dbReference type="FunFam" id="3.30.160.60:FF:000085">
    <property type="entry name" value="Snail zinc finger protein"/>
    <property type="match status" value="1"/>
</dbReference>
<dbReference type="FunFam" id="3.30.160.60:FF:000942">
    <property type="entry name" value="Snail zinc finger protein"/>
    <property type="match status" value="1"/>
</dbReference>
<dbReference type="FunFam" id="3.30.160.60:FF:000207">
    <property type="entry name" value="zinc finger protein SNAI2"/>
    <property type="match status" value="1"/>
</dbReference>
<dbReference type="Gene3D" id="3.30.160.60">
    <property type="entry name" value="Classic Zinc Finger"/>
    <property type="match status" value="4"/>
</dbReference>
<dbReference type="InterPro" id="IPR050527">
    <property type="entry name" value="Snail/Krueppel_Znf"/>
</dbReference>
<dbReference type="InterPro" id="IPR036236">
    <property type="entry name" value="Znf_C2H2_sf"/>
</dbReference>
<dbReference type="InterPro" id="IPR013087">
    <property type="entry name" value="Znf_C2H2_type"/>
</dbReference>
<dbReference type="PANTHER" id="PTHR24388">
    <property type="entry name" value="ZINC FINGER PROTEIN"/>
    <property type="match status" value="1"/>
</dbReference>
<dbReference type="PANTHER" id="PTHR24388:SF37">
    <property type="entry name" value="ZINC FINGER PROTEIN SNAI1"/>
    <property type="match status" value="1"/>
</dbReference>
<dbReference type="Pfam" id="PF00096">
    <property type="entry name" value="zf-C2H2"/>
    <property type="match status" value="2"/>
</dbReference>
<dbReference type="Pfam" id="PF13912">
    <property type="entry name" value="zf-C2H2_6"/>
    <property type="match status" value="1"/>
</dbReference>
<dbReference type="SMART" id="SM00355">
    <property type="entry name" value="ZnF_C2H2"/>
    <property type="match status" value="4"/>
</dbReference>
<dbReference type="SUPFAM" id="SSF57667">
    <property type="entry name" value="beta-beta-alpha zinc fingers"/>
    <property type="match status" value="3"/>
</dbReference>
<dbReference type="PROSITE" id="PS00028">
    <property type="entry name" value="ZINC_FINGER_C2H2_1"/>
    <property type="match status" value="3"/>
</dbReference>
<dbReference type="PROSITE" id="PS50157">
    <property type="entry name" value="ZINC_FINGER_C2H2_2"/>
    <property type="match status" value="4"/>
</dbReference>
<protein>
    <recommendedName>
        <fullName>Zinc finger protein SNAI1</fullName>
    </recommendedName>
    <alternativeName>
        <fullName>Protein snail homolog 1</fullName>
        <shortName>Protein sna</shortName>
    </alternativeName>
</protein>
<comment type="function">
    <text evidence="2 5 6 12">Involved in induction of the epithelial to mesenchymal transition (EMT), formation and maintenance of embryonic mesoderm, growth arrest, survival and cell migration. Binds to 3 E-boxes of the E-cadherin gene promoter and to the promoters of CLDN7 and KRT8 and, in association with histone demethylase KDM1A which it recruits to the promoters, causes a decrease in dimethylated H3K4 levels and represses transcription. Involved in induction of the epithelial to mesenchymal transition (EMT), formation and maintenance of embryonic mesoderm, growth arrest, survival and cell migration. Binds to 3 E-boxes of the E-cadherin/CDH1 gene promoter and to the promoters of CLDN7 and KRT8 and, in association with histone demethylase KDM1A which it recruits to the promoters, causes a decrease in dimethylated H3K4 levels and represses transcription. The N-terminal SNAG domain competes with histone H3 for the same binding site on the histone demethylase complex formed by KDM1A and RCOR1, and thereby inhibits demethylation of histone H3 at 'Lys-4' (in vitro) (By similarity). During EMT, involved with LOXL2 in negatively regulating pericentromeric heterochromatin transcription (PubMed:24239292). SNAI1 recruits LOXL2 to pericentromeric regions to oxidize histone H3 and repress transcription which leads to release of heterochromatin component CBX5/HP1A, enabling chromatin reorganization and acquisition of mesenchymal traits (PubMed:24239292). Associates with EGR1 and SP1 to mediate 12-O-tetradecanoylphorbol-13-acetate (TPA)-induced up-regulation of CDKN2B, possibly by binding to the CDKN2B promoter region 5'-TCACA-3'. In addition, may also activate the CDKN2B promoter by itself.</text>
</comment>
<comment type="subunit">
    <text evidence="2 8 9 10 11">Interacts with LOXL2 and LOXL3 (By similarity). Interacts with FBXL14 and GSK3B. Interacts with BTRC; interaction occurs when it is phosphorylated on the destruction motif. Interacts (via SNAG domain) with LIMD1 (via LIM domains), WTIP (via LIM domains) and AJUBA (via LIM domains). Interacts (via N-terminal region) with CSNK2A1. Interacts with EGR1 upon TPA induction. Interacts (via N-terminal region) with LATS2; the interaction is dependent on LATS2 kinase activity but independent of SNAI1 Thr-203 phosphorylation. Interacts (via zinc fingers) with KPNB1 and TNPO1; the interactions mediate nuclear import. Interacts (via zinc fingers) with KPNA1; the interaction disrupts the transport complex with KPNB1 and prevents nuclear import increasing SNAI1 degradation in the cytoplasm. Interacts (via zinc fingers) with KPNA2; the interaction, in combination with KPNB1, mediates nuclear import. Interacts with KPNA4; this interaction mediates nuclear import. May interact (via zinc fingers) with IPO7. Interacts (via zinc fingers) with PARP1; the interaction requires SNAI1 to be poly-ADP-ribosylated and non-phosphorylated (active) by GSK3B. Interacts (via SNAG domain) with KDM1A; the interaction is necessary for the down-regulation of dimethylated H3K4 mark and promoter activity of E-cadherin/CDH1, CDN7 and KRT8. Interacts with TP53/p53 and (via zinc fingers) with NOTCH1 (via intracellular domain); the interactions induce SNAI1 degradation via MDM2-mediated ubiquitination and inhibit SNAI1-induced cell invasion. Interacts with MDM2; the interaction promotes SNAI1 ubiquitination. Interacts (via zinc fingers) with CSNK1E. Interacts with PAK1.</text>
</comment>
<comment type="interaction">
    <interactant intactId="EBI-6049807">
        <id>Q02085</id>
    </interactant>
    <interactant intactId="EBI-355676">
        <id>P09874</id>
        <label>PARP1</label>
    </interactant>
    <organismsDiffer>true</organismsDiffer>
    <experiments>3</experiments>
</comment>
<comment type="subcellular location">
    <subcellularLocation>
        <location evidence="7">Nucleus</location>
    </subcellularLocation>
    <subcellularLocation>
        <location evidence="7">Cytoplasm</location>
    </subcellularLocation>
    <text evidence="2">Once phosphorylated (probably on Ser-107, Ser-111, Ser-115 and Ser-119) it is exported from the nucleus to the cytoplasm where subsequent phosphorylation of the destruction motif and ubiquitination involving BTRC occurs.</text>
</comment>
<comment type="tissue specificity">
    <text>While expression is completely absent from non-invasive cell lines, it is high in invasive and metastatic cell types.</text>
</comment>
<comment type="developmental stage">
    <text evidence="5">Postimplantation. Expression is observed in undifferentiated mesoderm and in tissues undergoing EMTs, namely the precursors of the neural crest cells and the primitive streak.</text>
</comment>
<comment type="PTM">
    <text evidence="2">Phosphorylated by GSK3B. Once phosphorylated, it becomes a target for ubiquitination by BTRC, the ECS(SPSB3) or the SCF(FBXO11) complexes. Phosphorylation by CSNK1E, probably at Ser-104, provides the priming site for the subsequent phosphorylation by GSK3B, probably at Ser-100 and Ser-96. Phosphorylation by PAK1 may modulate its transcriptional activity by promoting increased accumulation in the nucleus. Phosphorylation at Ser-11 and Ser-104 positively regulates its function in induction of EMT and/or cell survival, respectively. Phosphorylation by LATS2, upon mitotic stress, oncogenic stress or Hippo pathway activation, occurs in the nucleus and promotes nuclear retention and stabilization of total cellular protein level.</text>
</comment>
<comment type="PTM">
    <text evidence="2">Ubiquitinated on Lys-98, Lys-137 and Lys-146 by FBXL14 and BTRC leading to degradation. BTRC-triggered ubiquitination requires previous GSK3B-mediated SNAI1 phosphorylation. Ubiquitinated by the SCF(FBXO11) complex; ubiquitination requires previous GSK3B-mediated SNAI1 phosphorylation. Ubiquitinated by the ECS(SPSB3) complex; ubiquitination requires previous GSK3B-mediated SNAI1 phosphorylation. Ubiquitination induced upon interaction with NOTCH1 or p53 is mediated by MDM2. Ubiquitinated in a FBXL5-dependent manner; preventing interaction with DNA and promoting its degradation. Deubiquitinated by USP37; leading to stabilization.</text>
</comment>
<comment type="PTM">
    <text evidence="1">O-GlcNAcylation at Ser-112 is enhanced in hyperglycaemic conditions, it opposes phosphorylation by GSK3B, and stabilizes the protein.</text>
</comment>
<comment type="PTM">
    <text evidence="1">ADP-ribosylation by PARP1 increases protein half-life and may be involved in TGFB-induced SNAI1 up-regulation.</text>
</comment>
<comment type="disruption phenotype">
    <text evidence="6">Embryos die early in gestation, exhibiting defects in gastrulation and mesoderm formation. Recessive lethal mutation.</text>
</comment>
<comment type="similarity">
    <text evidence="13">Belongs to the snail C2H2-type zinc-finger protein family.</text>
</comment>
<keyword id="KW-0013">ADP-ribosylation</keyword>
<keyword id="KW-0963">Cytoplasm</keyword>
<keyword id="KW-0217">Developmental protein</keyword>
<keyword id="KW-0238">DNA-binding</keyword>
<keyword id="KW-0325">Glycoprotein</keyword>
<keyword id="KW-1017">Isopeptide bond</keyword>
<keyword id="KW-0479">Metal-binding</keyword>
<keyword id="KW-0539">Nucleus</keyword>
<keyword id="KW-0597">Phosphoprotein</keyword>
<keyword id="KW-1185">Reference proteome</keyword>
<keyword id="KW-0677">Repeat</keyword>
<keyword id="KW-0832">Ubl conjugation</keyword>
<keyword id="KW-0862">Zinc</keyword>
<keyword id="KW-0863">Zinc-finger</keyword>
<accession>Q02085</accession>
<gene>
    <name type="primary">Snai1</name>
    <name type="synonym">Sna</name>
</gene>